<reference key="1">
    <citation type="journal article" date="2008" name="Genome Res.">
        <title>Insights from the complete genome sequence of Mycobacterium marinum on the evolution of Mycobacterium tuberculosis.</title>
        <authorList>
            <person name="Stinear T.P."/>
            <person name="Seemann T."/>
            <person name="Harrison P.F."/>
            <person name="Jenkin G.A."/>
            <person name="Davies J.K."/>
            <person name="Johnson P.D."/>
            <person name="Abdellah Z."/>
            <person name="Arrowsmith C."/>
            <person name="Chillingworth T."/>
            <person name="Churcher C."/>
            <person name="Clarke K."/>
            <person name="Cronin A."/>
            <person name="Davis P."/>
            <person name="Goodhead I."/>
            <person name="Holroyd N."/>
            <person name="Jagels K."/>
            <person name="Lord A."/>
            <person name="Moule S."/>
            <person name="Mungall K."/>
            <person name="Norbertczak H."/>
            <person name="Quail M.A."/>
            <person name="Rabbinowitsch E."/>
            <person name="Walker D."/>
            <person name="White B."/>
            <person name="Whitehead S."/>
            <person name="Small P.L."/>
            <person name="Brosch R."/>
            <person name="Ramakrishnan L."/>
            <person name="Fischbach M.A."/>
            <person name="Parkhill J."/>
            <person name="Cole S.T."/>
        </authorList>
    </citation>
    <scope>NUCLEOTIDE SEQUENCE [LARGE SCALE GENOMIC DNA]</scope>
    <source>
        <strain>ATCC BAA-535 / M</strain>
    </source>
</reference>
<evidence type="ECO:0000255" key="1">
    <source>
        <dbReference type="HAMAP-Rule" id="MF_00251"/>
    </source>
</evidence>
<evidence type="ECO:0000305" key="2"/>
<dbReference type="EMBL" id="CP000854">
    <property type="protein sequence ID" value="ACC39542.1"/>
    <property type="molecule type" value="Genomic_DNA"/>
</dbReference>
<dbReference type="RefSeq" id="WP_003879483.1">
    <property type="nucleotide sequence ID" value="NC_010612.1"/>
</dbReference>
<dbReference type="SMR" id="B2HCX0"/>
<dbReference type="STRING" id="216594.MMAR_1086"/>
<dbReference type="GeneID" id="98799388"/>
<dbReference type="KEGG" id="mmi:MMAR_1086"/>
<dbReference type="eggNOG" id="COG0257">
    <property type="taxonomic scope" value="Bacteria"/>
</dbReference>
<dbReference type="HOGENOM" id="CLU_135723_6_2_11"/>
<dbReference type="OrthoDB" id="9802520at2"/>
<dbReference type="Proteomes" id="UP000001190">
    <property type="component" value="Chromosome"/>
</dbReference>
<dbReference type="GO" id="GO:0005737">
    <property type="term" value="C:cytoplasm"/>
    <property type="evidence" value="ECO:0007669"/>
    <property type="project" value="UniProtKB-ARBA"/>
</dbReference>
<dbReference type="GO" id="GO:1990904">
    <property type="term" value="C:ribonucleoprotein complex"/>
    <property type="evidence" value="ECO:0007669"/>
    <property type="project" value="UniProtKB-KW"/>
</dbReference>
<dbReference type="GO" id="GO:0005840">
    <property type="term" value="C:ribosome"/>
    <property type="evidence" value="ECO:0007669"/>
    <property type="project" value="UniProtKB-KW"/>
</dbReference>
<dbReference type="GO" id="GO:0003735">
    <property type="term" value="F:structural constituent of ribosome"/>
    <property type="evidence" value="ECO:0007669"/>
    <property type="project" value="InterPro"/>
</dbReference>
<dbReference type="GO" id="GO:0006412">
    <property type="term" value="P:translation"/>
    <property type="evidence" value="ECO:0007669"/>
    <property type="project" value="UniProtKB-UniRule"/>
</dbReference>
<dbReference type="HAMAP" id="MF_00251">
    <property type="entry name" value="Ribosomal_bL36"/>
    <property type="match status" value="1"/>
</dbReference>
<dbReference type="InterPro" id="IPR000473">
    <property type="entry name" value="Ribosomal_bL36"/>
</dbReference>
<dbReference type="InterPro" id="IPR035977">
    <property type="entry name" value="Ribosomal_bL36_sp"/>
</dbReference>
<dbReference type="NCBIfam" id="TIGR01022">
    <property type="entry name" value="rpmJ_bact"/>
    <property type="match status" value="1"/>
</dbReference>
<dbReference type="PANTHER" id="PTHR42888">
    <property type="entry name" value="50S RIBOSOMAL PROTEIN L36, CHLOROPLASTIC"/>
    <property type="match status" value="1"/>
</dbReference>
<dbReference type="PANTHER" id="PTHR42888:SF1">
    <property type="entry name" value="LARGE RIBOSOMAL SUBUNIT PROTEIN BL36C"/>
    <property type="match status" value="1"/>
</dbReference>
<dbReference type="Pfam" id="PF00444">
    <property type="entry name" value="Ribosomal_L36"/>
    <property type="match status" value="1"/>
</dbReference>
<dbReference type="SUPFAM" id="SSF57840">
    <property type="entry name" value="Ribosomal protein L36"/>
    <property type="match status" value="1"/>
</dbReference>
<dbReference type="PROSITE" id="PS00828">
    <property type="entry name" value="RIBOSOMAL_L36"/>
    <property type="match status" value="1"/>
</dbReference>
<proteinExistence type="inferred from homology"/>
<name>RL36_MYCMM</name>
<keyword id="KW-1185">Reference proteome</keyword>
<keyword id="KW-0687">Ribonucleoprotein</keyword>
<keyword id="KW-0689">Ribosomal protein</keyword>
<feature type="chain" id="PRO_1000101048" description="Large ribosomal subunit protein bL36">
    <location>
        <begin position="1"/>
        <end position="37"/>
    </location>
</feature>
<comment type="similarity">
    <text evidence="1">Belongs to the bacterial ribosomal protein bL36 family.</text>
</comment>
<protein>
    <recommendedName>
        <fullName evidence="1">Large ribosomal subunit protein bL36</fullName>
    </recommendedName>
    <alternativeName>
        <fullName evidence="2">50S ribosomal protein L36</fullName>
    </alternativeName>
</protein>
<gene>
    <name evidence="1" type="primary">rpmJ</name>
    <name type="ordered locus">MMAR_1086</name>
</gene>
<accession>B2HCX0</accession>
<organism>
    <name type="scientific">Mycobacterium marinum (strain ATCC BAA-535 / M)</name>
    <dbReference type="NCBI Taxonomy" id="216594"/>
    <lineage>
        <taxon>Bacteria</taxon>
        <taxon>Bacillati</taxon>
        <taxon>Actinomycetota</taxon>
        <taxon>Actinomycetes</taxon>
        <taxon>Mycobacteriales</taxon>
        <taxon>Mycobacteriaceae</taxon>
        <taxon>Mycobacterium</taxon>
        <taxon>Mycobacterium ulcerans group</taxon>
    </lineage>
</organism>
<sequence>MKVNPSVKPICDKCRVIRRHGRVMVICSDPRHKQRQG</sequence>